<gene>
    <name evidence="4" type="primary">dars-1</name>
    <name evidence="4" type="synonym">drs-1</name>
    <name evidence="4" type="ORF">B0464.1</name>
</gene>
<keyword id="KW-0030">Aminoacyl-tRNA synthetase</keyword>
<keyword id="KW-0067">ATP-binding</keyword>
<keyword id="KW-0963">Cytoplasm</keyword>
<keyword id="KW-0436">Ligase</keyword>
<keyword id="KW-0547">Nucleotide-binding</keyword>
<keyword id="KW-0648">Protein biosynthesis</keyword>
<keyword id="KW-1185">Reference proteome</keyword>
<comment type="catalytic activity">
    <reaction>
        <text>tRNA(Asp) + L-aspartate + ATP = L-aspartyl-tRNA(Asp) + AMP + diphosphate</text>
        <dbReference type="Rhea" id="RHEA:19649"/>
        <dbReference type="Rhea" id="RHEA-COMP:9660"/>
        <dbReference type="Rhea" id="RHEA-COMP:9678"/>
        <dbReference type="ChEBI" id="CHEBI:29991"/>
        <dbReference type="ChEBI" id="CHEBI:30616"/>
        <dbReference type="ChEBI" id="CHEBI:33019"/>
        <dbReference type="ChEBI" id="CHEBI:78442"/>
        <dbReference type="ChEBI" id="CHEBI:78516"/>
        <dbReference type="ChEBI" id="CHEBI:456215"/>
        <dbReference type="EC" id="6.1.1.12"/>
    </reaction>
</comment>
<comment type="subunit">
    <text evidence="1">Homodimer.</text>
</comment>
<comment type="subcellular location">
    <subcellularLocation>
        <location evidence="1">Cytoplasm</location>
    </subcellularLocation>
</comment>
<comment type="similarity">
    <text evidence="3">Belongs to the class-II aminoacyl-tRNA synthetase family. Type 2 subfamily.</text>
</comment>
<evidence type="ECO:0000250" key="1"/>
<evidence type="ECO:0000256" key="2">
    <source>
        <dbReference type="SAM" id="MobiDB-lite"/>
    </source>
</evidence>
<evidence type="ECO:0000305" key="3"/>
<evidence type="ECO:0000312" key="4">
    <source>
        <dbReference type="WormBase" id="B0464.1"/>
    </source>
</evidence>
<protein>
    <recommendedName>
        <fullName>Aspartate--tRNA ligase, cytoplasmic</fullName>
        <ecNumber>6.1.1.12</ecNumber>
    </recommendedName>
    <alternativeName>
        <fullName>Aspartyl-tRNA synthetase</fullName>
        <shortName>AspRS</shortName>
    </alternativeName>
</protein>
<sequence>MADAAEGEQPKLSKKELNKLARKAKKDEKAGEKGGNQQQAAAMDQEDASKDFYGSYGLVNSKEKKVLNFLKVKEINVSNATKDVWVRGRIHTTRSKGKNCFLVLRQGVYTVQVAMFMNEKISKQMLKFVSSISKESIVDVYATINKVDNPIESCTQKDVELLAQQVFVVSTSAPKLPLQIEDASRRAPTDEEKASEQENQLAVVNLDTRLDNRVIDLRTPTSHAIFRIQAGICNQFRNILDVRGFVEIMAPKIISAPSEGGANVFEVSYFKGSAYLAQSPQLYKQMAIAGDFEKVYTIGPVFRAEDSNTHRHMTEFVGLDLEMAFNFHYHEVMETIAEVLTQMFKGLQQNYQDEIAAVGNQYPAEPFQFCEPPLILKYPDAITLLRENGIEIGDEDDLSTPVEKFLGKLVKEKYSTDFYVLDKFPLSVRPFYTMPDAHDERYSNSYDMFMRGEEILSGAQRIHDADMLVERAKHHQVDLAKIQSYIDSFKYGCPPHAGGGIGLERVTMLFLGLHNIRLASLFPRDPKRLTP</sequence>
<accession>Q03577</accession>
<dbReference type="EC" id="6.1.1.12"/>
<dbReference type="EMBL" id="Z19152">
    <property type="protein sequence ID" value="CAA79536.1"/>
    <property type="molecule type" value="Genomic_DNA"/>
</dbReference>
<dbReference type="PIR" id="S28278">
    <property type="entry name" value="S28278"/>
</dbReference>
<dbReference type="RefSeq" id="NP_499089.1">
    <property type="nucleotide sequence ID" value="NM_066688.4"/>
</dbReference>
<dbReference type="SMR" id="Q03577"/>
<dbReference type="BioGRID" id="41531">
    <property type="interactions" value="17"/>
</dbReference>
<dbReference type="DIP" id="DIP-59879N"/>
<dbReference type="FunCoup" id="Q03577">
    <property type="interactions" value="2924"/>
</dbReference>
<dbReference type="IntAct" id="Q03577">
    <property type="interactions" value="1"/>
</dbReference>
<dbReference type="STRING" id="6239.B0464.1.2"/>
<dbReference type="iPTMnet" id="Q03577"/>
<dbReference type="PaxDb" id="6239-B0464.1.1"/>
<dbReference type="PeptideAtlas" id="Q03577"/>
<dbReference type="EnsemblMetazoa" id="B0464.1.1">
    <property type="protein sequence ID" value="B0464.1.1"/>
    <property type="gene ID" value="WBGene00001094"/>
</dbReference>
<dbReference type="GeneID" id="176334"/>
<dbReference type="KEGG" id="cel:CELE_B0464.1"/>
<dbReference type="UCSC" id="B0464.1.1">
    <property type="organism name" value="c. elegans"/>
</dbReference>
<dbReference type="AGR" id="WB:WBGene00001094"/>
<dbReference type="CTD" id="176334"/>
<dbReference type="WormBase" id="B0464.1">
    <property type="protein sequence ID" value="CE00015"/>
    <property type="gene ID" value="WBGene00001094"/>
    <property type="gene designation" value="dars-1"/>
</dbReference>
<dbReference type="eggNOG" id="KOG0556">
    <property type="taxonomic scope" value="Eukaryota"/>
</dbReference>
<dbReference type="GeneTree" id="ENSGT01030000234618"/>
<dbReference type="HOGENOM" id="CLU_004553_2_1_1"/>
<dbReference type="InParanoid" id="Q03577"/>
<dbReference type="OMA" id="WVHEIRD"/>
<dbReference type="OrthoDB" id="372395at2759"/>
<dbReference type="PhylomeDB" id="Q03577"/>
<dbReference type="PRO" id="PR:Q03577"/>
<dbReference type="Proteomes" id="UP000001940">
    <property type="component" value="Chromosome III"/>
</dbReference>
<dbReference type="Bgee" id="WBGene00001094">
    <property type="expression patterns" value="Expressed in germ line (C elegans) and 4 other cell types or tissues"/>
</dbReference>
<dbReference type="GO" id="GO:0017101">
    <property type="term" value="C:aminoacyl-tRNA synthetase multienzyme complex"/>
    <property type="evidence" value="ECO:0000318"/>
    <property type="project" value="GO_Central"/>
</dbReference>
<dbReference type="GO" id="GO:0005829">
    <property type="term" value="C:cytosol"/>
    <property type="evidence" value="ECO:0000318"/>
    <property type="project" value="GO_Central"/>
</dbReference>
<dbReference type="GO" id="GO:0004815">
    <property type="term" value="F:aspartate-tRNA ligase activity"/>
    <property type="evidence" value="ECO:0000318"/>
    <property type="project" value="GO_Central"/>
</dbReference>
<dbReference type="GO" id="GO:0005524">
    <property type="term" value="F:ATP binding"/>
    <property type="evidence" value="ECO:0007669"/>
    <property type="project" value="UniProtKB-KW"/>
</dbReference>
<dbReference type="GO" id="GO:0003723">
    <property type="term" value="F:RNA binding"/>
    <property type="evidence" value="ECO:0000318"/>
    <property type="project" value="GO_Central"/>
</dbReference>
<dbReference type="GO" id="GO:0006422">
    <property type="term" value="P:aspartyl-tRNA aminoacylation"/>
    <property type="evidence" value="ECO:0000318"/>
    <property type="project" value="GO_Central"/>
</dbReference>
<dbReference type="CDD" id="cd04320">
    <property type="entry name" value="AspRS_cyto_N"/>
    <property type="match status" value="1"/>
</dbReference>
<dbReference type="CDD" id="cd00776">
    <property type="entry name" value="AsxRS_core"/>
    <property type="match status" value="1"/>
</dbReference>
<dbReference type="FunFam" id="3.30.930.10:FF:000013">
    <property type="entry name" value="Aspartate--tRNA ligase, cytoplasmic"/>
    <property type="match status" value="1"/>
</dbReference>
<dbReference type="FunFam" id="2.40.50.140:FF:000132">
    <property type="entry name" value="Aspartyl-tRNA synthetase, cytoplasmic"/>
    <property type="match status" value="1"/>
</dbReference>
<dbReference type="Gene3D" id="3.30.930.10">
    <property type="entry name" value="Bira Bifunctional Protein, Domain 2"/>
    <property type="match status" value="1"/>
</dbReference>
<dbReference type="Gene3D" id="2.40.50.140">
    <property type="entry name" value="Nucleic acid-binding proteins"/>
    <property type="match status" value="1"/>
</dbReference>
<dbReference type="HAMAP" id="MF_02075">
    <property type="entry name" value="Asp_tRNA_synth_type2"/>
    <property type="match status" value="1"/>
</dbReference>
<dbReference type="InterPro" id="IPR004364">
    <property type="entry name" value="Aa-tRNA-synt_II"/>
</dbReference>
<dbReference type="InterPro" id="IPR006195">
    <property type="entry name" value="aa-tRNA-synth_II"/>
</dbReference>
<dbReference type="InterPro" id="IPR045864">
    <property type="entry name" value="aa-tRNA-synth_II/BPL/LPL"/>
</dbReference>
<dbReference type="InterPro" id="IPR004523">
    <property type="entry name" value="Asp-tRNA_synthase_2"/>
</dbReference>
<dbReference type="InterPro" id="IPR002312">
    <property type="entry name" value="Asp/Asn-tRNA-synth_IIb"/>
</dbReference>
<dbReference type="InterPro" id="IPR012340">
    <property type="entry name" value="NA-bd_OB-fold"/>
</dbReference>
<dbReference type="InterPro" id="IPR004365">
    <property type="entry name" value="NA-bd_OB_tRNA"/>
</dbReference>
<dbReference type="NCBIfam" id="TIGR00458">
    <property type="entry name" value="aspS_nondisc"/>
    <property type="match status" value="1"/>
</dbReference>
<dbReference type="NCBIfam" id="NF003483">
    <property type="entry name" value="PRK05159.1"/>
    <property type="match status" value="1"/>
</dbReference>
<dbReference type="PANTHER" id="PTHR43450:SF1">
    <property type="entry name" value="ASPARTATE--TRNA LIGASE, CYTOPLASMIC"/>
    <property type="match status" value="1"/>
</dbReference>
<dbReference type="PANTHER" id="PTHR43450">
    <property type="entry name" value="ASPARTYL-TRNA SYNTHETASE"/>
    <property type="match status" value="1"/>
</dbReference>
<dbReference type="Pfam" id="PF00152">
    <property type="entry name" value="tRNA-synt_2"/>
    <property type="match status" value="1"/>
</dbReference>
<dbReference type="Pfam" id="PF01336">
    <property type="entry name" value="tRNA_anti-codon"/>
    <property type="match status" value="1"/>
</dbReference>
<dbReference type="PRINTS" id="PR01042">
    <property type="entry name" value="TRNASYNTHASP"/>
</dbReference>
<dbReference type="SUPFAM" id="SSF55681">
    <property type="entry name" value="Class II aaRS and biotin synthetases"/>
    <property type="match status" value="1"/>
</dbReference>
<dbReference type="SUPFAM" id="SSF50249">
    <property type="entry name" value="Nucleic acid-binding proteins"/>
    <property type="match status" value="1"/>
</dbReference>
<dbReference type="PROSITE" id="PS50862">
    <property type="entry name" value="AA_TRNA_LIGASE_II"/>
    <property type="match status" value="1"/>
</dbReference>
<reference key="1">
    <citation type="journal article" date="1994" name="Nature">
        <title>2.2 Mb of contiguous nucleotide sequence from chromosome III of C. elegans.</title>
        <authorList>
            <person name="Wilson R."/>
            <person name="Ainscough R."/>
            <person name="Anderson K."/>
            <person name="Baynes C."/>
            <person name="Berks M."/>
            <person name="Bonfield J."/>
            <person name="Burton J."/>
            <person name="Connell M."/>
            <person name="Copsey T."/>
            <person name="Cooper J."/>
            <person name="Coulson A."/>
            <person name="Craxton M."/>
            <person name="Dear S."/>
            <person name="Du Z."/>
            <person name="Durbin R."/>
            <person name="Favello A."/>
            <person name="Fraser A."/>
            <person name="Fulton L."/>
            <person name="Gardner A."/>
            <person name="Green P."/>
            <person name="Hawkins T."/>
            <person name="Hillier L."/>
            <person name="Jier M."/>
            <person name="Johnston L."/>
            <person name="Jones M."/>
            <person name="Kershaw J."/>
            <person name="Kirsten J."/>
            <person name="Laisster N."/>
            <person name="Latreille P."/>
            <person name="Lightning J."/>
            <person name="Lloyd C."/>
            <person name="Mortimore B."/>
            <person name="O'Callaghan M."/>
            <person name="Parsons J."/>
            <person name="Percy C."/>
            <person name="Rifken L."/>
            <person name="Roopra A."/>
            <person name="Saunders D."/>
            <person name="Shownkeen R."/>
            <person name="Sims M."/>
            <person name="Smaldon N."/>
            <person name="Smith A."/>
            <person name="Smith M."/>
            <person name="Sonnhammer E."/>
            <person name="Staden R."/>
            <person name="Sulston J."/>
            <person name="Thierry-Mieg J."/>
            <person name="Thomas K."/>
            <person name="Vaudin M."/>
            <person name="Vaughan K."/>
            <person name="Waterston R."/>
            <person name="Watson A."/>
            <person name="Weinstock L."/>
            <person name="Wilkinson-Sproat J."/>
            <person name="Wohldman P."/>
        </authorList>
    </citation>
    <scope>NUCLEOTIDE SEQUENCE [LARGE SCALE GENOMIC DNA]</scope>
    <source>
        <strain>Bristol N2</strain>
    </source>
</reference>
<reference key="2">
    <citation type="journal article" date="1998" name="Science">
        <title>Genome sequence of the nematode C. elegans: a platform for investigating biology.</title>
        <authorList>
            <consortium name="The C. elegans sequencing consortium"/>
        </authorList>
    </citation>
    <scope>NUCLEOTIDE SEQUENCE [LARGE SCALE GENOMIC DNA]</scope>
    <source>
        <strain>Bristol N2</strain>
    </source>
</reference>
<proteinExistence type="inferred from homology"/>
<feature type="chain" id="PRO_0000111013" description="Aspartate--tRNA ligase, cytoplasmic">
    <location>
        <begin position="1"/>
        <end position="531"/>
    </location>
</feature>
<feature type="region of interest" description="Disordered" evidence="2">
    <location>
        <begin position="1"/>
        <end position="45"/>
    </location>
</feature>
<feature type="region of interest" description="Aspartate" evidence="1">
    <location>
        <begin position="281"/>
        <end position="284"/>
    </location>
</feature>
<feature type="compositionally biased region" description="Basic and acidic residues" evidence="2">
    <location>
        <begin position="8"/>
        <end position="32"/>
    </location>
</feature>
<feature type="binding site" evidence="1">
    <location>
        <position position="259"/>
    </location>
    <ligand>
        <name>L-aspartate</name>
        <dbReference type="ChEBI" id="CHEBI:29991"/>
    </ligand>
</feature>
<feature type="binding site" evidence="1">
    <location>
        <begin position="303"/>
        <end position="305"/>
    </location>
    <ligand>
        <name>ATP</name>
        <dbReference type="ChEBI" id="CHEBI:30616"/>
    </ligand>
</feature>
<feature type="binding site" evidence="1">
    <location>
        <position position="303"/>
    </location>
    <ligand>
        <name>L-aspartate</name>
        <dbReference type="ChEBI" id="CHEBI:29991"/>
    </ligand>
</feature>
<feature type="binding site" evidence="1">
    <location>
        <begin position="311"/>
        <end position="313"/>
    </location>
    <ligand>
        <name>ATP</name>
        <dbReference type="ChEBI" id="CHEBI:30616"/>
    </ligand>
</feature>
<feature type="binding site" evidence="1">
    <location>
        <position position="454"/>
    </location>
    <ligand>
        <name>ATP</name>
        <dbReference type="ChEBI" id="CHEBI:30616"/>
    </ligand>
</feature>
<feature type="binding site" evidence="1">
    <location>
        <position position="457"/>
    </location>
    <ligand>
        <name>L-aspartate</name>
        <dbReference type="ChEBI" id="CHEBI:29991"/>
    </ligand>
</feature>
<feature type="binding site" evidence="1">
    <location>
        <position position="461"/>
    </location>
    <ligand>
        <name>L-aspartate</name>
        <dbReference type="ChEBI" id="CHEBI:29991"/>
    </ligand>
</feature>
<feature type="binding site" evidence="1">
    <location>
        <begin position="502"/>
        <end position="505"/>
    </location>
    <ligand>
        <name>ATP</name>
        <dbReference type="ChEBI" id="CHEBI:30616"/>
    </ligand>
</feature>
<name>SYDC_CAEEL</name>
<organism>
    <name type="scientific">Caenorhabditis elegans</name>
    <dbReference type="NCBI Taxonomy" id="6239"/>
    <lineage>
        <taxon>Eukaryota</taxon>
        <taxon>Metazoa</taxon>
        <taxon>Ecdysozoa</taxon>
        <taxon>Nematoda</taxon>
        <taxon>Chromadorea</taxon>
        <taxon>Rhabditida</taxon>
        <taxon>Rhabditina</taxon>
        <taxon>Rhabditomorpha</taxon>
        <taxon>Rhabditoidea</taxon>
        <taxon>Rhabditidae</taxon>
        <taxon>Peloderinae</taxon>
        <taxon>Caenorhabditis</taxon>
    </lineage>
</organism>